<feature type="chain" id="PRO_0000132379" description="Small ribosomal subunit protein uS4">
    <location>
        <begin position="1"/>
        <end position="208"/>
    </location>
</feature>
<feature type="domain" description="S4 RNA-binding" evidence="1">
    <location>
        <begin position="98"/>
        <end position="161"/>
    </location>
</feature>
<name>RS4_NITV2</name>
<evidence type="ECO:0000255" key="1">
    <source>
        <dbReference type="HAMAP-Rule" id="MF_01306"/>
    </source>
</evidence>
<evidence type="ECO:0000305" key="2"/>
<sequence>MAKYTDAKCRQCRREGTKLFLKGDRCFTDKCAFDRRPYAPGQHGRARKKVSDYAVQLREKQKVRRMYGILEQQFHAYFTKADMAKGVTGANLLSLLERRLDNVIYRLGFANSRNQARQLVRHGIFTLNGRKVNIPSLQVRIGDTIEVPEKSRKIPVLAEAQEVIARRGCPAWLEADGANFRGVVKALPQREDIQFPINEHLIVELYSK</sequence>
<accession>Q72CF5</accession>
<comment type="function">
    <text evidence="1">One of the primary rRNA binding proteins, it binds directly to 16S rRNA where it nucleates assembly of the body of the 30S subunit.</text>
</comment>
<comment type="function">
    <text evidence="1">With S5 and S12 plays an important role in translational accuracy.</text>
</comment>
<comment type="subunit">
    <text evidence="1">Part of the 30S ribosomal subunit. Contacts protein S5. The interaction surface between S4 and S5 is involved in control of translational fidelity.</text>
</comment>
<comment type="similarity">
    <text evidence="1">Belongs to the universal ribosomal protein uS4 family.</text>
</comment>
<gene>
    <name evidence="1" type="primary">rpsD</name>
    <name type="ordered locus">DVU_1328</name>
</gene>
<organism>
    <name type="scientific">Nitratidesulfovibrio vulgaris (strain ATCC 29579 / DSM 644 / CCUG 34227 / NCIMB 8303 / VKM B-1760 / Hildenborough)</name>
    <name type="common">Desulfovibrio vulgaris</name>
    <dbReference type="NCBI Taxonomy" id="882"/>
    <lineage>
        <taxon>Bacteria</taxon>
        <taxon>Pseudomonadati</taxon>
        <taxon>Thermodesulfobacteriota</taxon>
        <taxon>Desulfovibrionia</taxon>
        <taxon>Desulfovibrionales</taxon>
        <taxon>Desulfovibrionaceae</taxon>
        <taxon>Nitratidesulfovibrio</taxon>
    </lineage>
</organism>
<reference key="1">
    <citation type="journal article" date="2004" name="Nat. Biotechnol.">
        <title>The genome sequence of the anaerobic, sulfate-reducing bacterium Desulfovibrio vulgaris Hildenborough.</title>
        <authorList>
            <person name="Heidelberg J.F."/>
            <person name="Seshadri R."/>
            <person name="Haveman S.A."/>
            <person name="Hemme C.L."/>
            <person name="Paulsen I.T."/>
            <person name="Kolonay J.F."/>
            <person name="Eisen J.A."/>
            <person name="Ward N.L."/>
            <person name="Methe B.A."/>
            <person name="Brinkac L.M."/>
            <person name="Daugherty S.C."/>
            <person name="DeBoy R.T."/>
            <person name="Dodson R.J."/>
            <person name="Durkin A.S."/>
            <person name="Madupu R."/>
            <person name="Nelson W.C."/>
            <person name="Sullivan S.A."/>
            <person name="Fouts D.E."/>
            <person name="Haft D.H."/>
            <person name="Selengut J."/>
            <person name="Peterson J.D."/>
            <person name="Davidsen T.M."/>
            <person name="Zafar N."/>
            <person name="Zhou L."/>
            <person name="Radune D."/>
            <person name="Dimitrov G."/>
            <person name="Hance M."/>
            <person name="Tran K."/>
            <person name="Khouri H.M."/>
            <person name="Gill J."/>
            <person name="Utterback T.R."/>
            <person name="Feldblyum T.V."/>
            <person name="Wall J.D."/>
            <person name="Voordouw G."/>
            <person name="Fraser C.M."/>
        </authorList>
    </citation>
    <scope>NUCLEOTIDE SEQUENCE [LARGE SCALE GENOMIC DNA]</scope>
    <source>
        <strain>ATCC 29579 / DSM 644 / CCUG 34227 / NCIMB 8303 / VKM B-1760 / Hildenborough</strain>
    </source>
</reference>
<dbReference type="EMBL" id="AE017285">
    <property type="protein sequence ID" value="AAS95806.1"/>
    <property type="molecule type" value="Genomic_DNA"/>
</dbReference>
<dbReference type="RefSeq" id="WP_010938623.1">
    <property type="nucleotide sequence ID" value="NC_002937.3"/>
</dbReference>
<dbReference type="RefSeq" id="YP_010547.1">
    <property type="nucleotide sequence ID" value="NC_002937.3"/>
</dbReference>
<dbReference type="SMR" id="Q72CF5"/>
<dbReference type="STRING" id="882.DVU_1328"/>
<dbReference type="PaxDb" id="882-DVU_1328"/>
<dbReference type="EnsemblBacteria" id="AAS95806">
    <property type="protein sequence ID" value="AAS95806"/>
    <property type="gene ID" value="DVU_1328"/>
</dbReference>
<dbReference type="KEGG" id="dvu:DVU_1328"/>
<dbReference type="PATRIC" id="fig|882.5.peg.1240"/>
<dbReference type="eggNOG" id="COG0522">
    <property type="taxonomic scope" value="Bacteria"/>
</dbReference>
<dbReference type="HOGENOM" id="CLU_092403_0_2_7"/>
<dbReference type="OrthoDB" id="9803672at2"/>
<dbReference type="PhylomeDB" id="Q72CF5"/>
<dbReference type="Proteomes" id="UP000002194">
    <property type="component" value="Chromosome"/>
</dbReference>
<dbReference type="GO" id="GO:0015935">
    <property type="term" value="C:small ribosomal subunit"/>
    <property type="evidence" value="ECO:0007669"/>
    <property type="project" value="InterPro"/>
</dbReference>
<dbReference type="GO" id="GO:0019843">
    <property type="term" value="F:rRNA binding"/>
    <property type="evidence" value="ECO:0007669"/>
    <property type="project" value="UniProtKB-UniRule"/>
</dbReference>
<dbReference type="GO" id="GO:0003735">
    <property type="term" value="F:structural constituent of ribosome"/>
    <property type="evidence" value="ECO:0007669"/>
    <property type="project" value="InterPro"/>
</dbReference>
<dbReference type="GO" id="GO:0042274">
    <property type="term" value="P:ribosomal small subunit biogenesis"/>
    <property type="evidence" value="ECO:0007669"/>
    <property type="project" value="TreeGrafter"/>
</dbReference>
<dbReference type="GO" id="GO:0006412">
    <property type="term" value="P:translation"/>
    <property type="evidence" value="ECO:0007669"/>
    <property type="project" value="UniProtKB-UniRule"/>
</dbReference>
<dbReference type="CDD" id="cd00165">
    <property type="entry name" value="S4"/>
    <property type="match status" value="1"/>
</dbReference>
<dbReference type="FunFam" id="1.10.1050.10:FF:000001">
    <property type="entry name" value="30S ribosomal protein S4"/>
    <property type="match status" value="1"/>
</dbReference>
<dbReference type="FunFam" id="3.10.290.10:FF:000001">
    <property type="entry name" value="30S ribosomal protein S4"/>
    <property type="match status" value="1"/>
</dbReference>
<dbReference type="Gene3D" id="1.10.1050.10">
    <property type="entry name" value="Ribosomal Protein S4 Delta 41, Chain A, domain 1"/>
    <property type="match status" value="1"/>
</dbReference>
<dbReference type="Gene3D" id="3.10.290.10">
    <property type="entry name" value="RNA-binding S4 domain"/>
    <property type="match status" value="1"/>
</dbReference>
<dbReference type="HAMAP" id="MF_01306_B">
    <property type="entry name" value="Ribosomal_uS4_B"/>
    <property type="match status" value="1"/>
</dbReference>
<dbReference type="InterPro" id="IPR022801">
    <property type="entry name" value="Ribosomal_uS4"/>
</dbReference>
<dbReference type="InterPro" id="IPR005709">
    <property type="entry name" value="Ribosomal_uS4_bac-type"/>
</dbReference>
<dbReference type="InterPro" id="IPR018079">
    <property type="entry name" value="Ribosomal_uS4_CS"/>
</dbReference>
<dbReference type="InterPro" id="IPR001912">
    <property type="entry name" value="Ribosomal_uS4_N"/>
</dbReference>
<dbReference type="InterPro" id="IPR002942">
    <property type="entry name" value="S4_RNA-bd"/>
</dbReference>
<dbReference type="InterPro" id="IPR036986">
    <property type="entry name" value="S4_RNA-bd_sf"/>
</dbReference>
<dbReference type="NCBIfam" id="NF003717">
    <property type="entry name" value="PRK05327.1"/>
    <property type="match status" value="1"/>
</dbReference>
<dbReference type="NCBIfam" id="TIGR01017">
    <property type="entry name" value="rpsD_bact"/>
    <property type="match status" value="1"/>
</dbReference>
<dbReference type="PANTHER" id="PTHR11831">
    <property type="entry name" value="30S 40S RIBOSOMAL PROTEIN"/>
    <property type="match status" value="1"/>
</dbReference>
<dbReference type="PANTHER" id="PTHR11831:SF4">
    <property type="entry name" value="SMALL RIBOSOMAL SUBUNIT PROTEIN US4M"/>
    <property type="match status" value="1"/>
</dbReference>
<dbReference type="Pfam" id="PF00163">
    <property type="entry name" value="Ribosomal_S4"/>
    <property type="match status" value="1"/>
</dbReference>
<dbReference type="Pfam" id="PF01479">
    <property type="entry name" value="S4"/>
    <property type="match status" value="1"/>
</dbReference>
<dbReference type="SMART" id="SM01390">
    <property type="entry name" value="Ribosomal_S4"/>
    <property type="match status" value="1"/>
</dbReference>
<dbReference type="SMART" id="SM00363">
    <property type="entry name" value="S4"/>
    <property type="match status" value="1"/>
</dbReference>
<dbReference type="SUPFAM" id="SSF55174">
    <property type="entry name" value="Alpha-L RNA-binding motif"/>
    <property type="match status" value="1"/>
</dbReference>
<dbReference type="PROSITE" id="PS00632">
    <property type="entry name" value="RIBOSOMAL_S4"/>
    <property type="match status" value="1"/>
</dbReference>
<dbReference type="PROSITE" id="PS50889">
    <property type="entry name" value="S4"/>
    <property type="match status" value="1"/>
</dbReference>
<protein>
    <recommendedName>
        <fullName evidence="1">Small ribosomal subunit protein uS4</fullName>
    </recommendedName>
    <alternativeName>
        <fullName evidence="2">30S ribosomal protein S4</fullName>
    </alternativeName>
</protein>
<keyword id="KW-1185">Reference proteome</keyword>
<keyword id="KW-0687">Ribonucleoprotein</keyword>
<keyword id="KW-0689">Ribosomal protein</keyword>
<keyword id="KW-0694">RNA-binding</keyword>
<keyword id="KW-0699">rRNA-binding</keyword>
<proteinExistence type="inferred from homology"/>